<proteinExistence type="inferred from homology"/>
<comment type="function">
    <text evidence="1">Functions as a substrate-specific channel for nucleosides and deoxynucleosides.</text>
</comment>
<comment type="subcellular location">
    <subcellularLocation>
        <location evidence="1">Cell outer membrane</location>
        <topology evidence="1">Multi-pass membrane protein</topology>
    </subcellularLocation>
</comment>
<comment type="similarity">
    <text evidence="3">Belongs to the nucleoside-specific channel-forming outer membrane porin (Tsx) (TC 1.B.10) family.</text>
</comment>
<organism>
    <name type="scientific">Escherichia coli O157:H7</name>
    <dbReference type="NCBI Taxonomy" id="83334"/>
    <lineage>
        <taxon>Bacteria</taxon>
        <taxon>Pseudomonadati</taxon>
        <taxon>Pseudomonadota</taxon>
        <taxon>Gammaproteobacteria</taxon>
        <taxon>Enterobacterales</taxon>
        <taxon>Enterobacteriaceae</taxon>
        <taxon>Escherichia</taxon>
    </lineage>
</organism>
<evidence type="ECO:0000250" key="1">
    <source>
        <dbReference type="UniProtKB" id="P0A927"/>
    </source>
</evidence>
<evidence type="ECO:0000255" key="2"/>
<evidence type="ECO:0000305" key="3"/>
<dbReference type="EMBL" id="AE005174">
    <property type="protein sequence ID" value="AAG54760.1"/>
    <property type="molecule type" value="Genomic_DNA"/>
</dbReference>
<dbReference type="EMBL" id="BA000007">
    <property type="protein sequence ID" value="BAB33887.1"/>
    <property type="molecule type" value="Genomic_DNA"/>
</dbReference>
<dbReference type="PIR" id="H90686">
    <property type="entry name" value="H90686"/>
</dbReference>
<dbReference type="RefSeq" id="NP_308491.1">
    <property type="nucleotide sequence ID" value="NC_002695.1"/>
</dbReference>
<dbReference type="RefSeq" id="WP_001295328.1">
    <property type="nucleotide sequence ID" value="NZ_VOAI01000005.1"/>
</dbReference>
<dbReference type="SMR" id="P0A928"/>
<dbReference type="STRING" id="155864.Z0512"/>
<dbReference type="GeneID" id="75202833"/>
<dbReference type="GeneID" id="914566"/>
<dbReference type="KEGG" id="ece:Z0512"/>
<dbReference type="KEGG" id="ecs:ECs_0464"/>
<dbReference type="PATRIC" id="fig|386585.9.peg.564"/>
<dbReference type="eggNOG" id="COG3248">
    <property type="taxonomic scope" value="Bacteria"/>
</dbReference>
<dbReference type="HOGENOM" id="CLU_073836_0_0_6"/>
<dbReference type="OMA" id="KSTGWGY"/>
<dbReference type="Proteomes" id="UP000000558">
    <property type="component" value="Chromosome"/>
</dbReference>
<dbReference type="Proteomes" id="UP000002519">
    <property type="component" value="Chromosome"/>
</dbReference>
<dbReference type="GO" id="GO:0009279">
    <property type="term" value="C:cell outer membrane"/>
    <property type="evidence" value="ECO:0007669"/>
    <property type="project" value="UniProtKB-SubCell"/>
</dbReference>
<dbReference type="GO" id="GO:0046930">
    <property type="term" value="C:pore complex"/>
    <property type="evidence" value="ECO:0007669"/>
    <property type="project" value="UniProtKB-KW"/>
</dbReference>
<dbReference type="GO" id="GO:0005337">
    <property type="term" value="F:nucleoside transmembrane transporter activity"/>
    <property type="evidence" value="ECO:0007669"/>
    <property type="project" value="InterPro"/>
</dbReference>
<dbReference type="GO" id="GO:0015288">
    <property type="term" value="F:porin activity"/>
    <property type="evidence" value="ECO:0007669"/>
    <property type="project" value="UniProtKB-KW"/>
</dbReference>
<dbReference type="GO" id="GO:0006811">
    <property type="term" value="P:monoatomic ion transport"/>
    <property type="evidence" value="ECO:0007669"/>
    <property type="project" value="UniProtKB-KW"/>
</dbReference>
<dbReference type="FunFam" id="2.40.230.20:FF:000001">
    <property type="entry name" value="Nucleoside-specific channel-forming protein Tsx"/>
    <property type="match status" value="1"/>
</dbReference>
<dbReference type="Gene3D" id="2.40.230.20">
    <property type="entry name" value="Nucleoside-specific channel-forming protein, Tsx-like"/>
    <property type="match status" value="1"/>
</dbReference>
<dbReference type="InterPro" id="IPR003055">
    <property type="entry name" value="Channel_Tsx"/>
</dbReference>
<dbReference type="InterPro" id="IPR018013">
    <property type="entry name" value="Channel_Tsx-like"/>
</dbReference>
<dbReference type="InterPro" id="IPR036777">
    <property type="entry name" value="Channel_Tsx-like_sf"/>
</dbReference>
<dbReference type="NCBIfam" id="NF011686">
    <property type="entry name" value="PRK15106.1"/>
    <property type="match status" value="1"/>
</dbReference>
<dbReference type="Pfam" id="PF03502">
    <property type="entry name" value="Channel_Tsx"/>
    <property type="match status" value="1"/>
</dbReference>
<dbReference type="PRINTS" id="PR01277">
    <property type="entry name" value="CHANNELTSX"/>
</dbReference>
<dbReference type="SUPFAM" id="SSF111364">
    <property type="entry name" value="Tsx-like channel"/>
    <property type="match status" value="1"/>
</dbReference>
<feature type="signal peptide" evidence="2">
    <location>
        <begin position="1"/>
        <end position="22"/>
    </location>
</feature>
<feature type="chain" id="PRO_0000025191" description="Nucleoside-specific channel-forming protein Tsx">
    <location>
        <begin position="23"/>
        <end position="294"/>
    </location>
</feature>
<protein>
    <recommendedName>
        <fullName evidence="1">Nucleoside-specific channel-forming protein Tsx</fullName>
    </recommendedName>
</protein>
<accession>P0A928</accession>
<accession>P22786</accession>
<gene>
    <name type="primary">tsx</name>
    <name type="ordered locus">Z0512</name>
    <name type="ordered locus">ECs0464</name>
</gene>
<name>TSX_ECO57</name>
<sequence>MKKTLLAAGAVLALSSSFTVNAAENDKPQYLSDWWHQSVNVVGSYHTRFGPQIRNDTYLEYEAFAKKDWFDFYGYADAPVFFGGNSDAKGIWNHGSPLFMEIEPRFSIDKLTNTDLSFGPFKEWYFANNYIYDMGRNKDGRQSTWYMGLGTDIDTGLPMSLSMNVYAKYQWQNYGAANENEWDGYRFKIKYFVPITDLWGGQLSYIGFTNFDWGSDLGDDSGNAINGIKTRTNNSIASSHILALNYDHWHYSVVARYWHDGGQWNDDAELNFGNGNFNVRSTGWGGYLVVGYNF</sequence>
<keyword id="KW-0998">Cell outer membrane</keyword>
<keyword id="KW-0406">Ion transport</keyword>
<keyword id="KW-0472">Membrane</keyword>
<keyword id="KW-0626">Porin</keyword>
<keyword id="KW-1185">Reference proteome</keyword>
<keyword id="KW-0732">Signal</keyword>
<keyword id="KW-0812">Transmembrane</keyword>
<keyword id="KW-1134">Transmembrane beta strand</keyword>
<keyword id="KW-0813">Transport</keyword>
<reference key="1">
    <citation type="journal article" date="2001" name="Nature">
        <title>Genome sequence of enterohaemorrhagic Escherichia coli O157:H7.</title>
        <authorList>
            <person name="Perna N.T."/>
            <person name="Plunkett G. III"/>
            <person name="Burland V."/>
            <person name="Mau B."/>
            <person name="Glasner J.D."/>
            <person name="Rose D.J."/>
            <person name="Mayhew G.F."/>
            <person name="Evans P.S."/>
            <person name="Gregor J."/>
            <person name="Kirkpatrick H.A."/>
            <person name="Posfai G."/>
            <person name="Hackett J."/>
            <person name="Klink S."/>
            <person name="Boutin A."/>
            <person name="Shao Y."/>
            <person name="Miller L."/>
            <person name="Grotbeck E.J."/>
            <person name="Davis N.W."/>
            <person name="Lim A."/>
            <person name="Dimalanta E.T."/>
            <person name="Potamousis K."/>
            <person name="Apodaca J."/>
            <person name="Anantharaman T.S."/>
            <person name="Lin J."/>
            <person name="Yen G."/>
            <person name="Schwartz D.C."/>
            <person name="Welch R.A."/>
            <person name="Blattner F.R."/>
        </authorList>
    </citation>
    <scope>NUCLEOTIDE SEQUENCE [LARGE SCALE GENOMIC DNA]</scope>
    <source>
        <strain>O157:H7 / EDL933 / ATCC 700927 / EHEC</strain>
    </source>
</reference>
<reference key="2">
    <citation type="journal article" date="2001" name="DNA Res.">
        <title>Complete genome sequence of enterohemorrhagic Escherichia coli O157:H7 and genomic comparison with a laboratory strain K-12.</title>
        <authorList>
            <person name="Hayashi T."/>
            <person name="Makino K."/>
            <person name="Ohnishi M."/>
            <person name="Kurokawa K."/>
            <person name="Ishii K."/>
            <person name="Yokoyama K."/>
            <person name="Han C.-G."/>
            <person name="Ohtsubo E."/>
            <person name="Nakayama K."/>
            <person name="Murata T."/>
            <person name="Tanaka M."/>
            <person name="Tobe T."/>
            <person name="Iida T."/>
            <person name="Takami H."/>
            <person name="Honda T."/>
            <person name="Sasakawa C."/>
            <person name="Ogasawara N."/>
            <person name="Yasunaga T."/>
            <person name="Kuhara S."/>
            <person name="Shiba T."/>
            <person name="Hattori M."/>
            <person name="Shinagawa H."/>
        </authorList>
    </citation>
    <scope>NUCLEOTIDE SEQUENCE [LARGE SCALE GENOMIC DNA]</scope>
    <source>
        <strain>O157:H7 / Sakai / RIMD 0509952 / EHEC</strain>
    </source>
</reference>